<evidence type="ECO:0000255" key="1">
    <source>
        <dbReference type="HAMAP-Rule" id="MF_00211"/>
    </source>
</evidence>
<proteinExistence type="inferred from homology"/>
<dbReference type="EC" id="2.4.2.18" evidence="1"/>
<dbReference type="EMBL" id="CP000614">
    <property type="protein sequence ID" value="ABO53521.1"/>
    <property type="molecule type" value="Genomic_DNA"/>
</dbReference>
<dbReference type="SMR" id="A4JB68"/>
<dbReference type="KEGG" id="bvi:Bcep1808_0509"/>
<dbReference type="eggNOG" id="COG0547">
    <property type="taxonomic scope" value="Bacteria"/>
</dbReference>
<dbReference type="HOGENOM" id="CLU_034315_2_1_4"/>
<dbReference type="UniPathway" id="UPA00035">
    <property type="reaction ID" value="UER00041"/>
</dbReference>
<dbReference type="Proteomes" id="UP000002287">
    <property type="component" value="Chromosome 1"/>
</dbReference>
<dbReference type="GO" id="GO:0005829">
    <property type="term" value="C:cytosol"/>
    <property type="evidence" value="ECO:0007669"/>
    <property type="project" value="TreeGrafter"/>
</dbReference>
<dbReference type="GO" id="GO:0004048">
    <property type="term" value="F:anthranilate phosphoribosyltransferase activity"/>
    <property type="evidence" value="ECO:0007669"/>
    <property type="project" value="UniProtKB-UniRule"/>
</dbReference>
<dbReference type="GO" id="GO:0000287">
    <property type="term" value="F:magnesium ion binding"/>
    <property type="evidence" value="ECO:0007669"/>
    <property type="project" value="UniProtKB-UniRule"/>
</dbReference>
<dbReference type="GO" id="GO:0000162">
    <property type="term" value="P:L-tryptophan biosynthetic process"/>
    <property type="evidence" value="ECO:0007669"/>
    <property type="project" value="UniProtKB-UniRule"/>
</dbReference>
<dbReference type="FunFam" id="1.20.970.10:FF:000006">
    <property type="entry name" value="Anthranilate phosphoribosyltransferase"/>
    <property type="match status" value="1"/>
</dbReference>
<dbReference type="FunFam" id="3.40.1030.10:FF:000002">
    <property type="entry name" value="Anthranilate phosphoribosyltransferase"/>
    <property type="match status" value="1"/>
</dbReference>
<dbReference type="Gene3D" id="3.40.1030.10">
    <property type="entry name" value="Nucleoside phosphorylase/phosphoribosyltransferase catalytic domain"/>
    <property type="match status" value="1"/>
</dbReference>
<dbReference type="Gene3D" id="1.20.970.10">
    <property type="entry name" value="Transferase, Pyrimidine Nucleoside Phosphorylase, Chain C"/>
    <property type="match status" value="1"/>
</dbReference>
<dbReference type="HAMAP" id="MF_00211">
    <property type="entry name" value="TrpD"/>
    <property type="match status" value="1"/>
</dbReference>
<dbReference type="InterPro" id="IPR005940">
    <property type="entry name" value="Anthranilate_Pribosyl_Tfrase"/>
</dbReference>
<dbReference type="InterPro" id="IPR000312">
    <property type="entry name" value="Glycosyl_Trfase_fam3"/>
</dbReference>
<dbReference type="InterPro" id="IPR017459">
    <property type="entry name" value="Glycosyl_Trfase_fam3_N_dom"/>
</dbReference>
<dbReference type="InterPro" id="IPR036320">
    <property type="entry name" value="Glycosyl_Trfase_fam3_N_dom_sf"/>
</dbReference>
<dbReference type="InterPro" id="IPR035902">
    <property type="entry name" value="Nuc_phospho_transferase"/>
</dbReference>
<dbReference type="NCBIfam" id="TIGR01245">
    <property type="entry name" value="trpD"/>
    <property type="match status" value="1"/>
</dbReference>
<dbReference type="PANTHER" id="PTHR43285">
    <property type="entry name" value="ANTHRANILATE PHOSPHORIBOSYLTRANSFERASE"/>
    <property type="match status" value="1"/>
</dbReference>
<dbReference type="PANTHER" id="PTHR43285:SF2">
    <property type="entry name" value="ANTHRANILATE PHOSPHORIBOSYLTRANSFERASE"/>
    <property type="match status" value="1"/>
</dbReference>
<dbReference type="Pfam" id="PF02885">
    <property type="entry name" value="Glycos_trans_3N"/>
    <property type="match status" value="1"/>
</dbReference>
<dbReference type="Pfam" id="PF00591">
    <property type="entry name" value="Glycos_transf_3"/>
    <property type="match status" value="1"/>
</dbReference>
<dbReference type="SUPFAM" id="SSF52418">
    <property type="entry name" value="Nucleoside phosphorylase/phosphoribosyltransferase catalytic domain"/>
    <property type="match status" value="1"/>
</dbReference>
<dbReference type="SUPFAM" id="SSF47648">
    <property type="entry name" value="Nucleoside phosphorylase/phosphoribosyltransferase N-terminal domain"/>
    <property type="match status" value="1"/>
</dbReference>
<feature type="chain" id="PRO_1000043002" description="Anthranilate phosphoribosyltransferase">
    <location>
        <begin position="1"/>
        <end position="343"/>
    </location>
</feature>
<feature type="binding site" evidence="1">
    <location>
        <position position="84"/>
    </location>
    <ligand>
        <name>5-phospho-alpha-D-ribose 1-diphosphate</name>
        <dbReference type="ChEBI" id="CHEBI:58017"/>
    </ligand>
</feature>
<feature type="binding site" evidence="1">
    <location>
        <position position="84"/>
    </location>
    <ligand>
        <name>anthranilate</name>
        <dbReference type="ChEBI" id="CHEBI:16567"/>
        <label>1</label>
    </ligand>
</feature>
<feature type="binding site" evidence="1">
    <location>
        <begin position="87"/>
        <end position="88"/>
    </location>
    <ligand>
        <name>5-phospho-alpha-D-ribose 1-diphosphate</name>
        <dbReference type="ChEBI" id="CHEBI:58017"/>
    </ligand>
</feature>
<feature type="binding site" evidence="1">
    <location>
        <position position="92"/>
    </location>
    <ligand>
        <name>5-phospho-alpha-D-ribose 1-diphosphate</name>
        <dbReference type="ChEBI" id="CHEBI:58017"/>
    </ligand>
</feature>
<feature type="binding site" evidence="1">
    <location>
        <begin position="94"/>
        <end position="97"/>
    </location>
    <ligand>
        <name>5-phospho-alpha-D-ribose 1-diphosphate</name>
        <dbReference type="ChEBI" id="CHEBI:58017"/>
    </ligand>
</feature>
<feature type="binding site" evidence="1">
    <location>
        <position position="96"/>
    </location>
    <ligand>
        <name>Mg(2+)</name>
        <dbReference type="ChEBI" id="CHEBI:18420"/>
        <label>1</label>
    </ligand>
</feature>
<feature type="binding site" evidence="1">
    <location>
        <begin position="112"/>
        <end position="120"/>
    </location>
    <ligand>
        <name>5-phospho-alpha-D-ribose 1-diphosphate</name>
        <dbReference type="ChEBI" id="CHEBI:58017"/>
    </ligand>
</feature>
<feature type="binding site" evidence="1">
    <location>
        <position position="115"/>
    </location>
    <ligand>
        <name>anthranilate</name>
        <dbReference type="ChEBI" id="CHEBI:16567"/>
        <label>1</label>
    </ligand>
</feature>
<feature type="binding site" evidence="1">
    <location>
        <position position="124"/>
    </location>
    <ligand>
        <name>5-phospho-alpha-D-ribose 1-diphosphate</name>
        <dbReference type="ChEBI" id="CHEBI:58017"/>
    </ligand>
</feature>
<feature type="binding site" evidence="1">
    <location>
        <position position="170"/>
    </location>
    <ligand>
        <name>anthranilate</name>
        <dbReference type="ChEBI" id="CHEBI:16567"/>
        <label>2</label>
    </ligand>
</feature>
<feature type="binding site" evidence="1">
    <location>
        <position position="229"/>
    </location>
    <ligand>
        <name>Mg(2+)</name>
        <dbReference type="ChEBI" id="CHEBI:18420"/>
        <label>2</label>
    </ligand>
</feature>
<feature type="binding site" evidence="1">
    <location>
        <position position="230"/>
    </location>
    <ligand>
        <name>Mg(2+)</name>
        <dbReference type="ChEBI" id="CHEBI:18420"/>
        <label>1</label>
    </ligand>
</feature>
<feature type="binding site" evidence="1">
    <location>
        <position position="230"/>
    </location>
    <ligand>
        <name>Mg(2+)</name>
        <dbReference type="ChEBI" id="CHEBI:18420"/>
        <label>2</label>
    </ligand>
</feature>
<keyword id="KW-0028">Amino-acid biosynthesis</keyword>
<keyword id="KW-0057">Aromatic amino acid biosynthesis</keyword>
<keyword id="KW-0328">Glycosyltransferase</keyword>
<keyword id="KW-0460">Magnesium</keyword>
<keyword id="KW-0479">Metal-binding</keyword>
<keyword id="KW-0808">Transferase</keyword>
<keyword id="KW-0822">Tryptophan biosynthesis</keyword>
<reference key="1">
    <citation type="submission" date="2007-03" db="EMBL/GenBank/DDBJ databases">
        <title>Complete sequence of chromosome 1 of Burkholderia vietnamiensis G4.</title>
        <authorList>
            <consortium name="US DOE Joint Genome Institute"/>
            <person name="Copeland A."/>
            <person name="Lucas S."/>
            <person name="Lapidus A."/>
            <person name="Barry K."/>
            <person name="Detter J.C."/>
            <person name="Glavina del Rio T."/>
            <person name="Hammon N."/>
            <person name="Israni S."/>
            <person name="Dalin E."/>
            <person name="Tice H."/>
            <person name="Pitluck S."/>
            <person name="Chain P."/>
            <person name="Malfatti S."/>
            <person name="Shin M."/>
            <person name="Vergez L."/>
            <person name="Schmutz J."/>
            <person name="Larimer F."/>
            <person name="Land M."/>
            <person name="Hauser L."/>
            <person name="Kyrpides N."/>
            <person name="Tiedje J."/>
            <person name="Richardson P."/>
        </authorList>
    </citation>
    <scope>NUCLEOTIDE SEQUENCE [LARGE SCALE GENOMIC DNA]</scope>
    <source>
        <strain>G4 / LMG 22486</strain>
    </source>
</reference>
<organism>
    <name type="scientific">Burkholderia vietnamiensis (strain G4 / LMG 22486)</name>
    <name type="common">Burkholderia cepacia (strain R1808)</name>
    <dbReference type="NCBI Taxonomy" id="269482"/>
    <lineage>
        <taxon>Bacteria</taxon>
        <taxon>Pseudomonadati</taxon>
        <taxon>Pseudomonadota</taxon>
        <taxon>Betaproteobacteria</taxon>
        <taxon>Burkholderiales</taxon>
        <taxon>Burkholderiaceae</taxon>
        <taxon>Burkholderia</taxon>
        <taxon>Burkholderia cepacia complex</taxon>
    </lineage>
</organism>
<name>TRPD_BURVG</name>
<sequence length="343" mass="36711">MTITPQEALQRTIEHREIFHDEMLHLMRLIMRGDMSPVMAAAIITGLRVKKETIGEIAAAATVMREFAHHVEVPDNSNFVDIVGTGGDGAHTFNISTASMFVTAAAGAKVAKHGNRGVSSKSGSADVLEALGVNIDLQPDQVAASIAETGMGFMFAPNHHPAMKNIAAVRRELGVRTIFNILGPLTNPAGAPNQLMGVFHADLVGIQVRVMQRLGAQHVLVVYGKDGMDEVSLGAATLVGELRDGQVHEYEIHPEDFGLQMVSNRTLKVENADESRVMLLGALDNQPGVAREIVTLNAGTALYAANVAASIADGIQLAREAIASGKARAKVDELVRFTQQFKR</sequence>
<protein>
    <recommendedName>
        <fullName evidence="1">Anthranilate phosphoribosyltransferase</fullName>
        <ecNumber evidence="1">2.4.2.18</ecNumber>
    </recommendedName>
</protein>
<accession>A4JB68</accession>
<gene>
    <name evidence="1" type="primary">trpD</name>
    <name type="ordered locus">Bcep1808_0509</name>
</gene>
<comment type="function">
    <text evidence="1">Catalyzes the transfer of the phosphoribosyl group of 5-phosphorylribose-1-pyrophosphate (PRPP) to anthranilate to yield N-(5'-phosphoribosyl)-anthranilate (PRA).</text>
</comment>
<comment type="catalytic activity">
    <reaction evidence="1">
        <text>N-(5-phospho-beta-D-ribosyl)anthranilate + diphosphate = 5-phospho-alpha-D-ribose 1-diphosphate + anthranilate</text>
        <dbReference type="Rhea" id="RHEA:11768"/>
        <dbReference type="ChEBI" id="CHEBI:16567"/>
        <dbReference type="ChEBI" id="CHEBI:18277"/>
        <dbReference type="ChEBI" id="CHEBI:33019"/>
        <dbReference type="ChEBI" id="CHEBI:58017"/>
        <dbReference type="EC" id="2.4.2.18"/>
    </reaction>
</comment>
<comment type="cofactor">
    <cofactor evidence="1">
        <name>Mg(2+)</name>
        <dbReference type="ChEBI" id="CHEBI:18420"/>
    </cofactor>
    <text evidence="1">Binds 2 magnesium ions per monomer.</text>
</comment>
<comment type="pathway">
    <text evidence="1">Amino-acid biosynthesis; L-tryptophan biosynthesis; L-tryptophan from chorismate: step 2/5.</text>
</comment>
<comment type="subunit">
    <text evidence="1">Homodimer.</text>
</comment>
<comment type="similarity">
    <text evidence="1">Belongs to the anthranilate phosphoribosyltransferase family.</text>
</comment>